<feature type="chain" id="PRO_0000087995" description="Retron Ec67 DNA adenine methylase">
    <location>
        <begin position="1"/>
        <end position="285"/>
    </location>
</feature>
<feature type="binding site" evidence="1">
    <location>
        <position position="7"/>
    </location>
    <ligand>
        <name>S-adenosyl-L-methionine</name>
        <dbReference type="ChEBI" id="CHEBI:59789"/>
    </ligand>
</feature>
<feature type="binding site" evidence="1">
    <location>
        <position position="11"/>
    </location>
    <ligand>
        <name>S-adenosyl-L-methionine</name>
        <dbReference type="ChEBI" id="CHEBI:59789"/>
    </ligand>
</feature>
<feature type="binding site" evidence="1">
    <location>
        <position position="51"/>
    </location>
    <ligand>
        <name>S-adenosyl-L-methionine</name>
        <dbReference type="ChEBI" id="CHEBI:59789"/>
    </ligand>
</feature>
<feature type="binding site" evidence="1">
    <location>
        <position position="179"/>
    </location>
    <ligand>
        <name>S-adenosyl-L-methionine</name>
        <dbReference type="ChEBI" id="CHEBI:59789"/>
    </ligand>
</feature>
<dbReference type="EC" id="2.1.1.72"/>
<dbReference type="EMBL" id="M55249">
    <property type="protein sequence ID" value="AAA23396.1"/>
    <property type="molecule type" value="Genomic_DNA"/>
</dbReference>
<dbReference type="PIR" id="JQ0851">
    <property type="entry name" value="JQ0851"/>
</dbReference>
<dbReference type="RefSeq" id="WP_001522695.1">
    <property type="nucleotide sequence ID" value="NZ_VRWX01000020.1"/>
</dbReference>
<dbReference type="SMR" id="P21311"/>
<dbReference type="REBASE" id="2846">
    <property type="entry name" value="M.EcoEc67Dam"/>
</dbReference>
<dbReference type="GO" id="GO:1904047">
    <property type="term" value="F:S-adenosyl-L-methionine binding"/>
    <property type="evidence" value="ECO:0007669"/>
    <property type="project" value="TreeGrafter"/>
</dbReference>
<dbReference type="GO" id="GO:0043565">
    <property type="term" value="F:sequence-specific DNA binding"/>
    <property type="evidence" value="ECO:0007669"/>
    <property type="project" value="TreeGrafter"/>
</dbReference>
<dbReference type="GO" id="GO:0009007">
    <property type="term" value="F:site-specific DNA-methyltransferase (adenine-specific) activity"/>
    <property type="evidence" value="ECO:0007669"/>
    <property type="project" value="UniProtKB-EC"/>
</dbReference>
<dbReference type="GO" id="GO:0006260">
    <property type="term" value="P:DNA replication"/>
    <property type="evidence" value="ECO:0007669"/>
    <property type="project" value="UniProtKB-KW"/>
</dbReference>
<dbReference type="GO" id="GO:0009307">
    <property type="term" value="P:DNA restriction-modification system"/>
    <property type="evidence" value="ECO:0007669"/>
    <property type="project" value="InterPro"/>
</dbReference>
<dbReference type="GO" id="GO:0032259">
    <property type="term" value="P:methylation"/>
    <property type="evidence" value="ECO:0007669"/>
    <property type="project" value="UniProtKB-KW"/>
</dbReference>
<dbReference type="GO" id="GO:0006298">
    <property type="term" value="P:mismatch repair"/>
    <property type="evidence" value="ECO:0007669"/>
    <property type="project" value="TreeGrafter"/>
</dbReference>
<dbReference type="Gene3D" id="1.10.1020.10">
    <property type="entry name" value="Adenine-specific Methyltransferase, Domain 2"/>
    <property type="match status" value="1"/>
</dbReference>
<dbReference type="Gene3D" id="3.40.50.150">
    <property type="entry name" value="Vaccinia Virus protein VP39"/>
    <property type="match status" value="1"/>
</dbReference>
<dbReference type="InterPro" id="IPR023095">
    <property type="entry name" value="Ade_MeTrfase_dom_2"/>
</dbReference>
<dbReference type="InterPro" id="IPR002052">
    <property type="entry name" value="DNA_methylase_N6_adenine_CS"/>
</dbReference>
<dbReference type="InterPro" id="IPR012263">
    <property type="entry name" value="M_m6A_EcoRV"/>
</dbReference>
<dbReference type="InterPro" id="IPR012327">
    <property type="entry name" value="MeTrfase_D12"/>
</dbReference>
<dbReference type="InterPro" id="IPR029063">
    <property type="entry name" value="SAM-dependent_MTases_sf"/>
</dbReference>
<dbReference type="NCBIfam" id="TIGR00571">
    <property type="entry name" value="dam"/>
    <property type="match status" value="1"/>
</dbReference>
<dbReference type="PANTHER" id="PTHR30481">
    <property type="entry name" value="DNA ADENINE METHYLASE"/>
    <property type="match status" value="1"/>
</dbReference>
<dbReference type="PANTHER" id="PTHR30481:SF3">
    <property type="entry name" value="DNA ADENINE METHYLASE"/>
    <property type="match status" value="1"/>
</dbReference>
<dbReference type="Pfam" id="PF02086">
    <property type="entry name" value="MethyltransfD12"/>
    <property type="match status" value="1"/>
</dbReference>
<dbReference type="PIRSF" id="PIRSF000398">
    <property type="entry name" value="M_m6A_EcoRV"/>
    <property type="match status" value="1"/>
</dbReference>
<dbReference type="PRINTS" id="PR00505">
    <property type="entry name" value="D12N6MTFRASE"/>
</dbReference>
<dbReference type="SUPFAM" id="SSF53335">
    <property type="entry name" value="S-adenosyl-L-methionine-dependent methyltransferases"/>
    <property type="match status" value="1"/>
</dbReference>
<dbReference type="PROSITE" id="PS00092">
    <property type="entry name" value="N6_MTASE"/>
    <property type="match status" value="1"/>
</dbReference>
<proteinExistence type="inferred from homology"/>
<comment type="function">
    <text evidence="2 5">An alpha subtype methylase that recognizes the double-stranded sequence 5'-GATC-3' and methylates A-2 on both strands. May play a regulatory role in the functions of the retron.</text>
</comment>
<comment type="catalytic activity">
    <reaction>
        <text>a 2'-deoxyadenosine in DNA + S-adenosyl-L-methionine = an N(6)-methyl-2'-deoxyadenosine in DNA + S-adenosyl-L-homocysteine + H(+)</text>
        <dbReference type="Rhea" id="RHEA:15197"/>
        <dbReference type="Rhea" id="RHEA-COMP:12418"/>
        <dbReference type="Rhea" id="RHEA-COMP:12419"/>
        <dbReference type="ChEBI" id="CHEBI:15378"/>
        <dbReference type="ChEBI" id="CHEBI:57856"/>
        <dbReference type="ChEBI" id="CHEBI:59789"/>
        <dbReference type="ChEBI" id="CHEBI:90615"/>
        <dbReference type="ChEBI" id="CHEBI:90616"/>
        <dbReference type="EC" id="2.1.1.72"/>
    </reaction>
</comment>
<comment type="similarity">
    <text evidence="4">Belongs to the N(4)/N(6)-methyltransferase family.</text>
</comment>
<sequence length="285" mass="32255">MSTILKWAGNKTAIMSELKKHLPAGPRLVEPFAGSCAVMMATDYPSYLVADINPDLINLYKKIAADCEAFISRARVLFEIANREVAYYNIRQEFNYSTEITDFMKAVYFLYLNRHGYRGLCRYNKSGHFNIPYGNYKNPYFPEKEIRKFAEKAQRATFICASFDETLAMLQVGDVVYCDPPYDGTFSGYHTDGFTEDDQYHLASVLEYRSSEGHPVIVSNSDTSLIRSLYRNFTHHYIKAKRSIGVSAGESKSATEIIAVSGARCWVGFDPSRGVDSSAVYEVRV</sequence>
<evidence type="ECO:0000250" key="1"/>
<evidence type="ECO:0000303" key="2">
    <source>
    </source>
</evidence>
<evidence type="ECO:0000303" key="3">
    <source>
    </source>
</evidence>
<evidence type="ECO:0000305" key="4"/>
<evidence type="ECO:0000305" key="5">
    <source>
    </source>
</evidence>
<gene>
    <name evidence="3" type="primary">dam</name>
</gene>
<accession>P21311</accession>
<reference key="1">
    <citation type="journal article" date="1990" name="Proc. Natl. Acad. Sci. U.S.A.">
        <title>Retron for the 67-base multicopy single-stranded DNA from Escherichia coli: a potential transposable element encoding both reverse transcriptase and Dam methylase functions.</title>
        <authorList>
            <person name="Hsu M.-Y."/>
            <person name="Inouye M."/>
            <person name="Inouye S."/>
        </authorList>
    </citation>
    <scope>NUCLEOTIDE SEQUENCE [GENOMIC DNA]</scope>
    <scope>FUNCTION</scope>
    <source>
        <strain>O1:NM / CL-1</strain>
    </source>
</reference>
<reference key="2">
    <citation type="journal article" date="2003" name="Nucleic Acids Res.">
        <title>A nomenclature for restriction enzymes, DNA methyltransferases, homing endonucleases and their genes.</title>
        <authorList>
            <person name="Roberts R.J."/>
            <person name="Belfort M."/>
            <person name="Bestor T."/>
            <person name="Bhagwat A.S."/>
            <person name="Bickle T.A."/>
            <person name="Bitinaite J."/>
            <person name="Blumenthal R.M."/>
            <person name="Degtyarev S.K."/>
            <person name="Dryden D.T."/>
            <person name="Dybvig K."/>
            <person name="Firman K."/>
            <person name="Gromova E.S."/>
            <person name="Gumport R.I."/>
            <person name="Halford S.E."/>
            <person name="Hattman S."/>
            <person name="Heitman J."/>
            <person name="Hornby D.P."/>
            <person name="Janulaitis A."/>
            <person name="Jeltsch A."/>
            <person name="Josephsen J."/>
            <person name="Kiss A."/>
            <person name="Klaenhammer T.R."/>
            <person name="Kobayashi I."/>
            <person name="Kong H."/>
            <person name="Krueger D.H."/>
            <person name="Lacks S."/>
            <person name="Marinus M.G."/>
            <person name="Miyahara M."/>
            <person name="Morgan R.D."/>
            <person name="Murray N.E."/>
            <person name="Nagaraja V."/>
            <person name="Piekarowicz A."/>
            <person name="Pingoud A."/>
            <person name="Raleigh E."/>
            <person name="Rao D.N."/>
            <person name="Reich N."/>
            <person name="Repin V.E."/>
            <person name="Selker E.U."/>
            <person name="Shaw P.C."/>
            <person name="Stein D.C."/>
            <person name="Stoddard B.L."/>
            <person name="Szybalski W."/>
            <person name="Trautner T.A."/>
            <person name="Van Etten J.L."/>
            <person name="Vitor J.M."/>
            <person name="Wilson G.G."/>
            <person name="Xu S.Y."/>
        </authorList>
    </citation>
    <scope>NOMENCLATURE</scope>
    <scope>SUBTYPE</scope>
</reference>
<organism>
    <name type="scientific">Escherichia coli</name>
    <dbReference type="NCBI Taxonomy" id="562"/>
    <lineage>
        <taxon>Bacteria</taxon>
        <taxon>Pseudomonadati</taxon>
        <taxon>Pseudomonadota</taxon>
        <taxon>Gammaproteobacteria</taxon>
        <taxon>Enterobacterales</taxon>
        <taxon>Enterobacteriaceae</taxon>
        <taxon>Escherichia</taxon>
    </lineage>
</organism>
<protein>
    <recommendedName>
        <fullName>Retron Ec67 DNA adenine methylase</fullName>
        <ecNumber>2.1.1.72</ecNumber>
    </recommendedName>
    <alternativeName>
        <fullName>M.Eco67Dam</fullName>
    </alternativeName>
    <alternativeName>
        <fullName evidence="3">ORF1-Ec67 dam</fullName>
    </alternativeName>
    <alternativeName>
        <fullName evidence="2">Orphan methyltransferase M.EcoEc67Dam</fullName>
        <shortName evidence="2">M.EcoEc67Dam</shortName>
    </alternativeName>
</protein>
<keyword id="KW-0235">DNA replication</keyword>
<keyword id="KW-0489">Methyltransferase</keyword>
<keyword id="KW-0949">S-adenosyl-L-methionine</keyword>
<keyword id="KW-0808">Transferase</keyword>
<keyword id="KW-0814">Transposable element</keyword>
<name>DMA7_ECOLX</name>